<proteinExistence type="inferred from homology"/>
<keyword id="KW-1185">Reference proteome</keyword>
<keyword id="KW-0687">Ribonucleoprotein</keyword>
<keyword id="KW-0689">Ribosomal protein</keyword>
<keyword id="KW-0694">RNA-binding</keyword>
<keyword id="KW-0699">rRNA-binding</keyword>
<reference key="1">
    <citation type="submission" date="2005-08" db="EMBL/GenBank/DDBJ databases">
        <title>Complete sequence of Synechococcus sp. CC9902.</title>
        <authorList>
            <person name="Copeland A."/>
            <person name="Lucas S."/>
            <person name="Lapidus A."/>
            <person name="Barry K."/>
            <person name="Detter J.C."/>
            <person name="Glavina T."/>
            <person name="Hammon N."/>
            <person name="Israni S."/>
            <person name="Pitluck S."/>
            <person name="Martinez M."/>
            <person name="Schmutz J."/>
            <person name="Larimer F."/>
            <person name="Land M."/>
            <person name="Kyrpides N."/>
            <person name="Ivanova N."/>
            <person name="Richardson P."/>
        </authorList>
    </citation>
    <scope>NUCLEOTIDE SEQUENCE [LARGE SCALE GENOMIC DNA]</scope>
    <source>
        <strain>CC9902</strain>
    </source>
</reference>
<comment type="function">
    <text evidence="1">Binds to the 23S rRNA.</text>
</comment>
<comment type="similarity">
    <text evidence="1">Belongs to the bacterial ribosomal protein bL9 family.</text>
</comment>
<gene>
    <name evidence="1" type="primary">rplI</name>
    <name evidence="1" type="synonym">rpl9</name>
    <name type="ordered locus">Syncc9902_2193</name>
</gene>
<organism>
    <name type="scientific">Synechococcus sp. (strain CC9902)</name>
    <dbReference type="NCBI Taxonomy" id="316279"/>
    <lineage>
        <taxon>Bacteria</taxon>
        <taxon>Bacillati</taxon>
        <taxon>Cyanobacteriota</taxon>
        <taxon>Cyanophyceae</taxon>
        <taxon>Synechococcales</taxon>
        <taxon>Synechococcaceae</taxon>
        <taxon>Synechococcus</taxon>
    </lineage>
</organism>
<name>RL9_SYNS9</name>
<sequence length="152" mass="16912">MPKRVQVVLNEDILSLGKDGDLVDVAPGYARNFLLPFGKAVPVTPAVMKQVEHRRAKEVERQAALKQEALNFKTALDTIGRFTVKKQVGEDNVLFGTVTNGDVAEAIEESTKKEIDRRDILVPEIHRTGKYTVTVKLHSEVTAEINLEVVSY</sequence>
<accession>Q3AUG8</accession>
<protein>
    <recommendedName>
        <fullName evidence="1">Large ribosomal subunit protein bL9</fullName>
    </recommendedName>
    <alternativeName>
        <fullName evidence="2">50S ribosomal protein L9</fullName>
    </alternativeName>
</protein>
<feature type="chain" id="PRO_0000236602" description="Large ribosomal subunit protein bL9">
    <location>
        <begin position="1"/>
        <end position="152"/>
    </location>
</feature>
<evidence type="ECO:0000255" key="1">
    <source>
        <dbReference type="HAMAP-Rule" id="MF_00503"/>
    </source>
</evidence>
<evidence type="ECO:0000305" key="2"/>
<dbReference type="EMBL" id="CP000097">
    <property type="protein sequence ID" value="ABB27151.1"/>
    <property type="molecule type" value="Genomic_DNA"/>
</dbReference>
<dbReference type="RefSeq" id="WP_011360929.1">
    <property type="nucleotide sequence ID" value="NC_007513.1"/>
</dbReference>
<dbReference type="SMR" id="Q3AUG8"/>
<dbReference type="STRING" id="316279.Syncc9902_2193"/>
<dbReference type="KEGG" id="sye:Syncc9902_2193"/>
<dbReference type="eggNOG" id="COG0359">
    <property type="taxonomic scope" value="Bacteria"/>
</dbReference>
<dbReference type="HOGENOM" id="CLU_078938_3_0_3"/>
<dbReference type="OrthoDB" id="9788336at2"/>
<dbReference type="Proteomes" id="UP000002712">
    <property type="component" value="Chromosome"/>
</dbReference>
<dbReference type="GO" id="GO:1990904">
    <property type="term" value="C:ribonucleoprotein complex"/>
    <property type="evidence" value="ECO:0007669"/>
    <property type="project" value="UniProtKB-KW"/>
</dbReference>
<dbReference type="GO" id="GO:0005840">
    <property type="term" value="C:ribosome"/>
    <property type="evidence" value="ECO:0007669"/>
    <property type="project" value="UniProtKB-KW"/>
</dbReference>
<dbReference type="GO" id="GO:0019843">
    <property type="term" value="F:rRNA binding"/>
    <property type="evidence" value="ECO:0007669"/>
    <property type="project" value="UniProtKB-UniRule"/>
</dbReference>
<dbReference type="GO" id="GO:0003735">
    <property type="term" value="F:structural constituent of ribosome"/>
    <property type="evidence" value="ECO:0007669"/>
    <property type="project" value="InterPro"/>
</dbReference>
<dbReference type="GO" id="GO:0006412">
    <property type="term" value="P:translation"/>
    <property type="evidence" value="ECO:0007669"/>
    <property type="project" value="UniProtKB-UniRule"/>
</dbReference>
<dbReference type="Gene3D" id="3.10.430.100">
    <property type="entry name" value="Ribosomal protein L9, C-terminal domain"/>
    <property type="match status" value="1"/>
</dbReference>
<dbReference type="Gene3D" id="3.40.5.10">
    <property type="entry name" value="Ribosomal protein L9, N-terminal domain"/>
    <property type="match status" value="1"/>
</dbReference>
<dbReference type="HAMAP" id="MF_00503">
    <property type="entry name" value="Ribosomal_bL9"/>
    <property type="match status" value="1"/>
</dbReference>
<dbReference type="InterPro" id="IPR000244">
    <property type="entry name" value="Ribosomal_bL9"/>
</dbReference>
<dbReference type="InterPro" id="IPR009027">
    <property type="entry name" value="Ribosomal_bL9/RNase_H1_N"/>
</dbReference>
<dbReference type="InterPro" id="IPR020594">
    <property type="entry name" value="Ribosomal_bL9_bac/chp"/>
</dbReference>
<dbReference type="InterPro" id="IPR020069">
    <property type="entry name" value="Ribosomal_bL9_C"/>
</dbReference>
<dbReference type="InterPro" id="IPR036791">
    <property type="entry name" value="Ribosomal_bL9_C_sf"/>
</dbReference>
<dbReference type="InterPro" id="IPR020070">
    <property type="entry name" value="Ribosomal_bL9_N"/>
</dbReference>
<dbReference type="InterPro" id="IPR036935">
    <property type="entry name" value="Ribosomal_bL9_N_sf"/>
</dbReference>
<dbReference type="NCBIfam" id="TIGR00158">
    <property type="entry name" value="L9"/>
    <property type="match status" value="1"/>
</dbReference>
<dbReference type="PANTHER" id="PTHR21368">
    <property type="entry name" value="50S RIBOSOMAL PROTEIN L9"/>
    <property type="match status" value="1"/>
</dbReference>
<dbReference type="Pfam" id="PF03948">
    <property type="entry name" value="Ribosomal_L9_C"/>
    <property type="match status" value="1"/>
</dbReference>
<dbReference type="Pfam" id="PF01281">
    <property type="entry name" value="Ribosomal_L9_N"/>
    <property type="match status" value="1"/>
</dbReference>
<dbReference type="SUPFAM" id="SSF55658">
    <property type="entry name" value="L9 N-domain-like"/>
    <property type="match status" value="1"/>
</dbReference>
<dbReference type="SUPFAM" id="SSF55653">
    <property type="entry name" value="Ribosomal protein L9 C-domain"/>
    <property type="match status" value="1"/>
</dbReference>
<dbReference type="PROSITE" id="PS00651">
    <property type="entry name" value="RIBOSOMAL_L9"/>
    <property type="match status" value="1"/>
</dbReference>